<organism>
    <name type="scientific">Thermoplasma volcanium (strain ATCC 51530 / DSM 4299 / JCM 9571 / NBRC 15438 / GSS1)</name>
    <dbReference type="NCBI Taxonomy" id="273116"/>
    <lineage>
        <taxon>Archaea</taxon>
        <taxon>Methanobacteriati</taxon>
        <taxon>Thermoplasmatota</taxon>
        <taxon>Thermoplasmata</taxon>
        <taxon>Thermoplasmatales</taxon>
        <taxon>Thermoplasmataceae</taxon>
        <taxon>Thermoplasma</taxon>
    </lineage>
</organism>
<evidence type="ECO:0000255" key="1">
    <source>
        <dbReference type="HAMAP-Rule" id="MF_01111"/>
    </source>
</evidence>
<sequence length="179" mass="20737">MIIVTGMPGAGKDEFVKVARSLGFMDLHMGNTVREYASRNGIPDDDKEIGNFAASERKKFGMDIWARRTAEKIESDELTVIDGVRNKEEMDYFSKFSKSIYVVAIFANRKTRLERILKRDRPDDIRSMEGLIERDNRELSWGIGNVIALADYMIVNDESLEIFYERSRKLLFDHFLIRA</sequence>
<protein>
    <recommendedName>
        <fullName evidence="1">UPF0200 protein TV0279</fullName>
    </recommendedName>
</protein>
<comment type="similarity">
    <text evidence="1">Belongs to the UPF0200 family.</text>
</comment>
<feature type="chain" id="PRO_0000094537" description="UPF0200 protein TV0279">
    <location>
        <begin position="1"/>
        <end position="179"/>
    </location>
</feature>
<feature type="binding site" evidence="1">
    <location>
        <begin position="6"/>
        <end position="13"/>
    </location>
    <ligand>
        <name>ATP</name>
        <dbReference type="ChEBI" id="CHEBI:30616"/>
    </ligand>
</feature>
<dbReference type="EMBL" id="BA000011">
    <property type="protein sequence ID" value="BAB59421.1"/>
    <property type="molecule type" value="Genomic_DNA"/>
</dbReference>
<dbReference type="RefSeq" id="WP_010916534.1">
    <property type="nucleotide sequence ID" value="NC_002689.2"/>
</dbReference>
<dbReference type="SMR" id="Q97C26"/>
<dbReference type="STRING" id="273116.gene:9381053"/>
<dbReference type="PaxDb" id="273116-14324493"/>
<dbReference type="GeneID" id="1440792"/>
<dbReference type="KEGG" id="tvo:TVG0291894"/>
<dbReference type="eggNOG" id="arCOG01045">
    <property type="taxonomic scope" value="Archaea"/>
</dbReference>
<dbReference type="HOGENOM" id="CLU_096329_1_0_2"/>
<dbReference type="OrthoDB" id="85381at2157"/>
<dbReference type="PhylomeDB" id="Q97C26"/>
<dbReference type="Proteomes" id="UP000001017">
    <property type="component" value="Chromosome"/>
</dbReference>
<dbReference type="GO" id="GO:0005524">
    <property type="term" value="F:ATP binding"/>
    <property type="evidence" value="ECO:0007669"/>
    <property type="project" value="UniProtKB-UniRule"/>
</dbReference>
<dbReference type="Gene3D" id="3.40.50.300">
    <property type="entry name" value="P-loop containing nucleotide triphosphate hydrolases"/>
    <property type="match status" value="1"/>
</dbReference>
<dbReference type="HAMAP" id="MF_01111">
    <property type="entry name" value="UPF0200"/>
    <property type="match status" value="1"/>
</dbReference>
<dbReference type="InterPro" id="IPR022970">
    <property type="entry name" value="NTP_hydrolase-rel"/>
</dbReference>
<dbReference type="InterPro" id="IPR027417">
    <property type="entry name" value="P-loop_NTPase"/>
</dbReference>
<dbReference type="PANTHER" id="PTHR41930:SF1">
    <property type="entry name" value="DEPHOSPHO-COA KINASE"/>
    <property type="match status" value="1"/>
</dbReference>
<dbReference type="PANTHER" id="PTHR41930">
    <property type="entry name" value="UPF0200 PROTEIN MJ1399"/>
    <property type="match status" value="1"/>
</dbReference>
<dbReference type="Pfam" id="PF13207">
    <property type="entry name" value="AAA_17"/>
    <property type="match status" value="1"/>
</dbReference>
<dbReference type="SUPFAM" id="SSF52540">
    <property type="entry name" value="P-loop containing nucleoside triphosphate hydrolases"/>
    <property type="match status" value="1"/>
</dbReference>
<reference key="1">
    <citation type="journal article" date="2000" name="Proc. Natl. Acad. Sci. U.S.A.">
        <title>Archaeal adaptation to higher temperatures revealed by genomic sequence of Thermoplasma volcanium.</title>
        <authorList>
            <person name="Kawashima T."/>
            <person name="Amano N."/>
            <person name="Koike H."/>
            <person name="Makino S."/>
            <person name="Higuchi S."/>
            <person name="Kawashima-Ohya Y."/>
            <person name="Watanabe K."/>
            <person name="Yamazaki M."/>
            <person name="Kanehori K."/>
            <person name="Kawamoto T."/>
            <person name="Nunoshiba T."/>
            <person name="Yamamoto Y."/>
            <person name="Aramaki H."/>
            <person name="Makino K."/>
            <person name="Suzuki M."/>
        </authorList>
    </citation>
    <scope>NUCLEOTIDE SEQUENCE [LARGE SCALE GENOMIC DNA]</scope>
    <source>
        <strain>ATCC 51530 / DSM 4299 / JCM 9571 / NBRC 15438 / GSS1</strain>
    </source>
</reference>
<keyword id="KW-0067">ATP-binding</keyword>
<keyword id="KW-0547">Nucleotide-binding</keyword>
<gene>
    <name type="ordered locus">TV0279</name>
    <name type="ORF">TVG0291894</name>
</gene>
<name>Y279_THEVO</name>
<proteinExistence type="inferred from homology"/>
<accession>Q97C26</accession>